<accession>A3N4G4</accession>
<evidence type="ECO:0000255" key="1">
    <source>
        <dbReference type="HAMAP-Rule" id="MF_00296"/>
    </source>
</evidence>
<organism>
    <name type="scientific">Burkholderia pseudomallei (strain 668)</name>
    <dbReference type="NCBI Taxonomy" id="320373"/>
    <lineage>
        <taxon>Bacteria</taxon>
        <taxon>Pseudomonadati</taxon>
        <taxon>Pseudomonadota</taxon>
        <taxon>Betaproteobacteria</taxon>
        <taxon>Burkholderiales</taxon>
        <taxon>Burkholderiaceae</taxon>
        <taxon>Burkholderia</taxon>
        <taxon>pseudomallei group</taxon>
    </lineage>
</organism>
<feature type="chain" id="PRO_1000021874" description="Homoserine O-succinyltransferase">
    <location>
        <begin position="1"/>
        <end position="381"/>
    </location>
</feature>
<feature type="domain" description="AB hydrolase-1" evidence="1">
    <location>
        <begin position="45"/>
        <end position="360"/>
    </location>
</feature>
<feature type="active site" description="Nucleophile" evidence="1">
    <location>
        <position position="151"/>
    </location>
</feature>
<feature type="active site" evidence="1">
    <location>
        <position position="321"/>
    </location>
</feature>
<feature type="active site" evidence="1">
    <location>
        <position position="354"/>
    </location>
</feature>
<feature type="binding site" evidence="1">
    <location>
        <position position="221"/>
    </location>
    <ligand>
        <name>substrate</name>
    </ligand>
</feature>
<feature type="binding site" evidence="1">
    <location>
        <position position="355"/>
    </location>
    <ligand>
        <name>substrate</name>
    </ligand>
</feature>
<feature type="site" description="Important for acyl-CoA specificity" evidence="1">
    <location>
        <position position="323"/>
    </location>
</feature>
<keyword id="KW-0012">Acyltransferase</keyword>
<keyword id="KW-0028">Amino-acid biosynthesis</keyword>
<keyword id="KW-0963">Cytoplasm</keyword>
<keyword id="KW-0486">Methionine biosynthesis</keyword>
<keyword id="KW-0808">Transferase</keyword>
<gene>
    <name evidence="1" type="primary">metXS</name>
    <name type="ordered locus">BURPS668_0182</name>
</gene>
<proteinExistence type="inferred from homology"/>
<comment type="function">
    <text evidence="1">Transfers a succinyl group from succinyl-CoA to L-homoserine, forming succinyl-L-homoserine.</text>
</comment>
<comment type="catalytic activity">
    <reaction evidence="1">
        <text>L-homoserine + succinyl-CoA = O-succinyl-L-homoserine + CoA</text>
        <dbReference type="Rhea" id="RHEA:22008"/>
        <dbReference type="ChEBI" id="CHEBI:57287"/>
        <dbReference type="ChEBI" id="CHEBI:57292"/>
        <dbReference type="ChEBI" id="CHEBI:57476"/>
        <dbReference type="ChEBI" id="CHEBI:57661"/>
        <dbReference type="EC" id="2.3.1.46"/>
    </reaction>
</comment>
<comment type="pathway">
    <text evidence="1">Amino-acid biosynthesis; L-methionine biosynthesis via de novo pathway; O-succinyl-L-homoserine from L-homoserine: step 1/1.</text>
</comment>
<comment type="subunit">
    <text evidence="1">Homodimer.</text>
</comment>
<comment type="subcellular location">
    <subcellularLocation>
        <location evidence="1">Cytoplasm</location>
    </subcellularLocation>
</comment>
<comment type="similarity">
    <text evidence="1">Belongs to the AB hydrolase superfamily. MetX family.</text>
</comment>
<sequence>MESIGVVAPHTMHFAEPLRLQSGSVLGNYQLVVETYGELNAARSNAVLVCHALNASHHVAGVYADDPRSTGWWDNMVGPGKPLDTNRFFVIGVNNLGSCFGSTGPMSIDPATGTPYGARFPVVTVEDWVHAQARVADAFGIERFAAVMGGSLGGMQALAWSLLYPERVAHCIDIASTPKLSAQNIAFNEVARSAILSDPDFHGGDYYAHGVKPRRGLRVARMIGHITYLSDDDMAEKFGRALRRADGALDAYNFNFDVEFEVESYLRYQGDKFADYFDANTYLLITRALDYFDPAKAFNGDLSAALAHTKAKYLIASFMTDWRFAPARSREIVKALLDNRRSVSYAEIDAPHGHDAFLLDDARYHNLVRAYYERIAEEVGA</sequence>
<protein>
    <recommendedName>
        <fullName evidence="1">Homoserine O-succinyltransferase</fullName>
        <shortName evidence="1">HST</shortName>
        <ecNumber evidence="1">2.3.1.46</ecNumber>
    </recommendedName>
    <alternativeName>
        <fullName evidence="1">Homoserine transsuccinylase</fullName>
        <shortName evidence="1">HTS</shortName>
    </alternativeName>
</protein>
<dbReference type="EC" id="2.3.1.46" evidence="1"/>
<dbReference type="EMBL" id="CP000570">
    <property type="protein sequence ID" value="ABN83606.1"/>
    <property type="molecule type" value="Genomic_DNA"/>
</dbReference>
<dbReference type="SMR" id="A3N4G4"/>
<dbReference type="ESTHER" id="burma-metx">
    <property type="family name" value="Homoserine_transacetylase"/>
</dbReference>
<dbReference type="KEGG" id="bpd:BURPS668_0182"/>
<dbReference type="HOGENOM" id="CLU_028760_1_2_4"/>
<dbReference type="UniPathway" id="UPA00051">
    <property type="reaction ID" value="UER00075"/>
</dbReference>
<dbReference type="GO" id="GO:0005737">
    <property type="term" value="C:cytoplasm"/>
    <property type="evidence" value="ECO:0007669"/>
    <property type="project" value="UniProtKB-SubCell"/>
</dbReference>
<dbReference type="GO" id="GO:0004414">
    <property type="term" value="F:homoserine O-acetyltransferase activity"/>
    <property type="evidence" value="ECO:0007669"/>
    <property type="project" value="TreeGrafter"/>
</dbReference>
<dbReference type="GO" id="GO:0008899">
    <property type="term" value="F:homoserine O-succinyltransferase activity"/>
    <property type="evidence" value="ECO:0007669"/>
    <property type="project" value="UniProtKB-UniRule"/>
</dbReference>
<dbReference type="GO" id="GO:0009092">
    <property type="term" value="P:homoserine metabolic process"/>
    <property type="evidence" value="ECO:0007669"/>
    <property type="project" value="TreeGrafter"/>
</dbReference>
<dbReference type="GO" id="GO:0009086">
    <property type="term" value="P:methionine biosynthetic process"/>
    <property type="evidence" value="ECO:0007669"/>
    <property type="project" value="UniProtKB-UniRule"/>
</dbReference>
<dbReference type="FunFam" id="1.10.1740.110:FF:000001">
    <property type="entry name" value="Homoserine O-acetyltransferase"/>
    <property type="match status" value="1"/>
</dbReference>
<dbReference type="Gene3D" id="1.10.1740.110">
    <property type="match status" value="1"/>
</dbReference>
<dbReference type="Gene3D" id="3.40.50.1820">
    <property type="entry name" value="alpha/beta hydrolase"/>
    <property type="match status" value="1"/>
</dbReference>
<dbReference type="HAMAP" id="MF_00296">
    <property type="entry name" value="MetX_acyltransf"/>
    <property type="match status" value="1"/>
</dbReference>
<dbReference type="InterPro" id="IPR000073">
    <property type="entry name" value="AB_hydrolase_1"/>
</dbReference>
<dbReference type="InterPro" id="IPR029058">
    <property type="entry name" value="AB_hydrolase_fold"/>
</dbReference>
<dbReference type="InterPro" id="IPR008220">
    <property type="entry name" value="HAT_MetX-like"/>
</dbReference>
<dbReference type="NCBIfam" id="TIGR01392">
    <property type="entry name" value="homoserO_Ac_trn"/>
    <property type="match status" value="1"/>
</dbReference>
<dbReference type="NCBIfam" id="NF001209">
    <property type="entry name" value="PRK00175.1"/>
    <property type="match status" value="1"/>
</dbReference>
<dbReference type="PANTHER" id="PTHR32268">
    <property type="entry name" value="HOMOSERINE O-ACETYLTRANSFERASE"/>
    <property type="match status" value="1"/>
</dbReference>
<dbReference type="PANTHER" id="PTHR32268:SF11">
    <property type="entry name" value="HOMOSERINE O-ACETYLTRANSFERASE"/>
    <property type="match status" value="1"/>
</dbReference>
<dbReference type="Pfam" id="PF00561">
    <property type="entry name" value="Abhydrolase_1"/>
    <property type="match status" value="1"/>
</dbReference>
<dbReference type="PIRSF" id="PIRSF000443">
    <property type="entry name" value="Homoser_Ac_trans"/>
    <property type="match status" value="1"/>
</dbReference>
<dbReference type="SUPFAM" id="SSF53474">
    <property type="entry name" value="alpha/beta-Hydrolases"/>
    <property type="match status" value="1"/>
</dbReference>
<name>METXS_BURP6</name>
<reference key="1">
    <citation type="journal article" date="2010" name="Genome Biol. Evol.">
        <title>Continuing evolution of Burkholderia mallei through genome reduction and large-scale rearrangements.</title>
        <authorList>
            <person name="Losada L."/>
            <person name="Ronning C.M."/>
            <person name="DeShazer D."/>
            <person name="Woods D."/>
            <person name="Fedorova N."/>
            <person name="Kim H.S."/>
            <person name="Shabalina S.A."/>
            <person name="Pearson T.R."/>
            <person name="Brinkac L."/>
            <person name="Tan P."/>
            <person name="Nandi T."/>
            <person name="Crabtree J."/>
            <person name="Badger J."/>
            <person name="Beckstrom-Sternberg S."/>
            <person name="Saqib M."/>
            <person name="Schutzer S.E."/>
            <person name="Keim P."/>
            <person name="Nierman W.C."/>
        </authorList>
    </citation>
    <scope>NUCLEOTIDE SEQUENCE [LARGE SCALE GENOMIC DNA]</scope>
    <source>
        <strain>668</strain>
    </source>
</reference>